<accession>C1C5N7</accession>
<keyword id="KW-0067">ATP-binding</keyword>
<keyword id="KW-0143">Chaperone</keyword>
<keyword id="KW-0547">Nucleotide-binding</keyword>
<keyword id="KW-0597">Phosphoprotein</keyword>
<keyword id="KW-0346">Stress response</keyword>
<sequence>MSKIIGIDLGTTNSAVAVLEGTESKIIANPEGNRTTPSVVSFKNGEIIVGDAAKRQAVTNPDTVISIKSKMGTSEKVSANGKEYTPQEISAMILQYLKGYAEDYLGEKVTKAVITVPAYFNDAQRQATKDAGKIAGLEVERIVNEPTAAALAYGLDKTDKEEKILVFDLGGGTFDVSILELGDGVFDVLSTAGDNKLGGDDFDQKIIDHLVAEFKKENGIDLSTDKMAMQRLKDAAEKAKKDLSGVTSTQISLPFITAGEAGPLHLEMTLTRAKFDDLTRDLVERTKVPVRQALSDAGLSLSEIDEVILVGGSTRIPAVVEAVKAETGKEPNKSVNPDEVVAMGAAIQGGVITGDVKDVVLLDVTPLSLGIETMGGVFTKLIDRNTTIPTSKSQVFSTAADNQPAVDIHVLQGERPMAADNKTLGRFQLTDIPAAPRGIPQIEVTFDIDKNGIVSVKAKDLGTQKEQTIVIQSNSGLTDEEIDRMMKDAEANAEADKKRKEEVDLRNEVDQAIFATEKTIKETEGKGFDAERDAAQAALDDLKKAQEDNNLDDMKAKLEALNEKAQGLAVKLYEQAAAAQQAQEGAEGAQATGNAGDDVVDGEFTEK</sequence>
<dbReference type="EMBL" id="CP000918">
    <property type="protein sequence ID" value="ACO16059.1"/>
    <property type="molecule type" value="Genomic_DNA"/>
</dbReference>
<dbReference type="RefSeq" id="WP_000034662.1">
    <property type="nucleotide sequence ID" value="NC_012468.1"/>
</dbReference>
<dbReference type="SMR" id="C1C5N7"/>
<dbReference type="GeneID" id="45654055"/>
<dbReference type="KEGG" id="snm:SP70585_0573"/>
<dbReference type="HOGENOM" id="CLU_005965_2_4_9"/>
<dbReference type="Proteomes" id="UP000002211">
    <property type="component" value="Chromosome"/>
</dbReference>
<dbReference type="GO" id="GO:0005524">
    <property type="term" value="F:ATP binding"/>
    <property type="evidence" value="ECO:0007669"/>
    <property type="project" value="UniProtKB-UniRule"/>
</dbReference>
<dbReference type="GO" id="GO:0140662">
    <property type="term" value="F:ATP-dependent protein folding chaperone"/>
    <property type="evidence" value="ECO:0007669"/>
    <property type="project" value="InterPro"/>
</dbReference>
<dbReference type="GO" id="GO:0051082">
    <property type="term" value="F:unfolded protein binding"/>
    <property type="evidence" value="ECO:0007669"/>
    <property type="project" value="InterPro"/>
</dbReference>
<dbReference type="CDD" id="cd10234">
    <property type="entry name" value="ASKHA_NBD_HSP70_DnaK-like"/>
    <property type="match status" value="1"/>
</dbReference>
<dbReference type="FunFam" id="2.60.34.10:FF:000014">
    <property type="entry name" value="Chaperone protein DnaK HSP70"/>
    <property type="match status" value="1"/>
</dbReference>
<dbReference type="FunFam" id="1.20.1270.10:FF:000004">
    <property type="entry name" value="Molecular chaperone DnaK"/>
    <property type="match status" value="1"/>
</dbReference>
<dbReference type="FunFam" id="3.30.420.40:FF:000071">
    <property type="entry name" value="Molecular chaperone DnaK"/>
    <property type="match status" value="1"/>
</dbReference>
<dbReference type="FunFam" id="3.90.640.10:FF:000003">
    <property type="entry name" value="Molecular chaperone DnaK"/>
    <property type="match status" value="1"/>
</dbReference>
<dbReference type="Gene3D" id="1.20.1270.10">
    <property type="match status" value="1"/>
</dbReference>
<dbReference type="Gene3D" id="3.30.420.40">
    <property type="match status" value="2"/>
</dbReference>
<dbReference type="Gene3D" id="3.90.640.10">
    <property type="entry name" value="Actin, Chain A, domain 4"/>
    <property type="match status" value="1"/>
</dbReference>
<dbReference type="Gene3D" id="2.60.34.10">
    <property type="entry name" value="Substrate Binding Domain Of DNAk, Chain A, domain 1"/>
    <property type="match status" value="1"/>
</dbReference>
<dbReference type="HAMAP" id="MF_00332">
    <property type="entry name" value="DnaK"/>
    <property type="match status" value="1"/>
</dbReference>
<dbReference type="InterPro" id="IPR043129">
    <property type="entry name" value="ATPase_NBD"/>
</dbReference>
<dbReference type="InterPro" id="IPR012725">
    <property type="entry name" value="Chaperone_DnaK"/>
</dbReference>
<dbReference type="InterPro" id="IPR018181">
    <property type="entry name" value="Heat_shock_70_CS"/>
</dbReference>
<dbReference type="InterPro" id="IPR029048">
    <property type="entry name" value="HSP70_C_sf"/>
</dbReference>
<dbReference type="InterPro" id="IPR029047">
    <property type="entry name" value="HSP70_peptide-bd_sf"/>
</dbReference>
<dbReference type="InterPro" id="IPR013126">
    <property type="entry name" value="Hsp_70_fam"/>
</dbReference>
<dbReference type="NCBIfam" id="NF001413">
    <property type="entry name" value="PRK00290.1"/>
    <property type="match status" value="1"/>
</dbReference>
<dbReference type="NCBIfam" id="TIGR02350">
    <property type="entry name" value="prok_dnaK"/>
    <property type="match status" value="1"/>
</dbReference>
<dbReference type="PANTHER" id="PTHR19375">
    <property type="entry name" value="HEAT SHOCK PROTEIN 70KDA"/>
    <property type="match status" value="1"/>
</dbReference>
<dbReference type="Pfam" id="PF00012">
    <property type="entry name" value="HSP70"/>
    <property type="match status" value="1"/>
</dbReference>
<dbReference type="PRINTS" id="PR00301">
    <property type="entry name" value="HEATSHOCK70"/>
</dbReference>
<dbReference type="SUPFAM" id="SSF53067">
    <property type="entry name" value="Actin-like ATPase domain"/>
    <property type="match status" value="2"/>
</dbReference>
<dbReference type="SUPFAM" id="SSF100934">
    <property type="entry name" value="Heat shock protein 70kD (HSP70), C-terminal subdomain"/>
    <property type="match status" value="1"/>
</dbReference>
<dbReference type="SUPFAM" id="SSF100920">
    <property type="entry name" value="Heat shock protein 70kD (HSP70), peptide-binding domain"/>
    <property type="match status" value="1"/>
</dbReference>
<dbReference type="PROSITE" id="PS00297">
    <property type="entry name" value="HSP70_1"/>
    <property type="match status" value="1"/>
</dbReference>
<dbReference type="PROSITE" id="PS00329">
    <property type="entry name" value="HSP70_2"/>
    <property type="match status" value="1"/>
</dbReference>
<dbReference type="PROSITE" id="PS01036">
    <property type="entry name" value="HSP70_3"/>
    <property type="match status" value="1"/>
</dbReference>
<feature type="chain" id="PRO_1000133162" description="Chaperone protein DnaK">
    <location>
        <begin position="1"/>
        <end position="607"/>
    </location>
</feature>
<feature type="region of interest" description="Disordered" evidence="2">
    <location>
        <begin position="580"/>
        <end position="607"/>
    </location>
</feature>
<feature type="compositionally biased region" description="Low complexity" evidence="2">
    <location>
        <begin position="580"/>
        <end position="591"/>
    </location>
</feature>
<feature type="compositionally biased region" description="Acidic residues" evidence="2">
    <location>
        <begin position="598"/>
        <end position="607"/>
    </location>
</feature>
<feature type="modified residue" description="Phosphothreonine; by autocatalysis" evidence="1">
    <location>
        <position position="173"/>
    </location>
</feature>
<protein>
    <recommendedName>
        <fullName evidence="1">Chaperone protein DnaK</fullName>
    </recommendedName>
    <alternativeName>
        <fullName evidence="1">HSP70</fullName>
    </alternativeName>
    <alternativeName>
        <fullName evidence="1">Heat shock 70 kDa protein</fullName>
    </alternativeName>
    <alternativeName>
        <fullName evidence="1">Heat shock protein 70</fullName>
    </alternativeName>
</protein>
<reference key="1">
    <citation type="journal article" date="2010" name="Genome Biol.">
        <title>Structure and dynamics of the pan-genome of Streptococcus pneumoniae and closely related species.</title>
        <authorList>
            <person name="Donati C."/>
            <person name="Hiller N.L."/>
            <person name="Tettelin H."/>
            <person name="Muzzi A."/>
            <person name="Croucher N.J."/>
            <person name="Angiuoli S.V."/>
            <person name="Oggioni M."/>
            <person name="Dunning Hotopp J.C."/>
            <person name="Hu F.Z."/>
            <person name="Riley D.R."/>
            <person name="Covacci A."/>
            <person name="Mitchell T.J."/>
            <person name="Bentley S.D."/>
            <person name="Kilian M."/>
            <person name="Ehrlich G.D."/>
            <person name="Rappuoli R."/>
            <person name="Moxon E.R."/>
            <person name="Masignani V."/>
        </authorList>
    </citation>
    <scope>NUCLEOTIDE SEQUENCE [LARGE SCALE GENOMIC DNA]</scope>
    <source>
        <strain>70585</strain>
    </source>
</reference>
<evidence type="ECO:0000255" key="1">
    <source>
        <dbReference type="HAMAP-Rule" id="MF_00332"/>
    </source>
</evidence>
<evidence type="ECO:0000256" key="2">
    <source>
        <dbReference type="SAM" id="MobiDB-lite"/>
    </source>
</evidence>
<proteinExistence type="inferred from homology"/>
<gene>
    <name evidence="1" type="primary">dnaK</name>
    <name type="ordered locus">SP70585_0573</name>
</gene>
<comment type="function">
    <text evidence="1">Acts as a chaperone.</text>
</comment>
<comment type="induction">
    <text evidence="1">By stress conditions e.g. heat shock.</text>
</comment>
<comment type="similarity">
    <text evidence="1">Belongs to the heat shock protein 70 family.</text>
</comment>
<name>DNAK_STRP7</name>
<organism>
    <name type="scientific">Streptococcus pneumoniae (strain 70585)</name>
    <dbReference type="NCBI Taxonomy" id="488221"/>
    <lineage>
        <taxon>Bacteria</taxon>
        <taxon>Bacillati</taxon>
        <taxon>Bacillota</taxon>
        <taxon>Bacilli</taxon>
        <taxon>Lactobacillales</taxon>
        <taxon>Streptococcaceae</taxon>
        <taxon>Streptococcus</taxon>
    </lineage>
</organism>